<dbReference type="EC" id="2.1.1.14"/>
<dbReference type="EMBL" id="X83499">
    <property type="protein sequence ID" value="CAA58474.1"/>
    <property type="molecule type" value="mRNA"/>
</dbReference>
<dbReference type="PIR" id="S57636">
    <property type="entry name" value="S57636"/>
</dbReference>
<dbReference type="SMR" id="Q42699"/>
<dbReference type="KEGG" id="ag:CAA58474"/>
<dbReference type="UniPathway" id="UPA00051">
    <property type="reaction ID" value="UER00082"/>
</dbReference>
<dbReference type="GO" id="GO:0005737">
    <property type="term" value="C:cytoplasm"/>
    <property type="evidence" value="ECO:0007669"/>
    <property type="project" value="UniProtKB-SubCell"/>
</dbReference>
<dbReference type="GO" id="GO:0003871">
    <property type="term" value="F:5-methyltetrahydropteroyltriglutamate-homocysteine S-methyltransferase activity"/>
    <property type="evidence" value="ECO:0007669"/>
    <property type="project" value="UniProtKB-EC"/>
</dbReference>
<dbReference type="GO" id="GO:0008270">
    <property type="term" value="F:zinc ion binding"/>
    <property type="evidence" value="ECO:0007669"/>
    <property type="project" value="InterPro"/>
</dbReference>
<dbReference type="GO" id="GO:0009086">
    <property type="term" value="P:methionine biosynthetic process"/>
    <property type="evidence" value="ECO:0007669"/>
    <property type="project" value="UniProtKB-KW"/>
</dbReference>
<dbReference type="GO" id="GO:0032259">
    <property type="term" value="P:methylation"/>
    <property type="evidence" value="ECO:0007669"/>
    <property type="project" value="UniProtKB-KW"/>
</dbReference>
<dbReference type="CDD" id="cd03311">
    <property type="entry name" value="CIMS_C_terminal_like"/>
    <property type="match status" value="1"/>
</dbReference>
<dbReference type="CDD" id="cd03312">
    <property type="entry name" value="CIMS_N_terminal_like"/>
    <property type="match status" value="1"/>
</dbReference>
<dbReference type="FunFam" id="3.20.20.210:FF:000002">
    <property type="entry name" value="5-methyltetrahydropteroyltriglutamate--homocysteine methyltransferase"/>
    <property type="match status" value="1"/>
</dbReference>
<dbReference type="FunFam" id="3.20.20.210:FF:000003">
    <property type="entry name" value="5-methyltetrahydropteroyltriglutamate--homocysteine methyltransferase"/>
    <property type="match status" value="1"/>
</dbReference>
<dbReference type="Gene3D" id="3.20.20.210">
    <property type="match status" value="2"/>
</dbReference>
<dbReference type="HAMAP" id="MF_00172">
    <property type="entry name" value="Meth_synth"/>
    <property type="match status" value="1"/>
</dbReference>
<dbReference type="InterPro" id="IPR013215">
    <property type="entry name" value="Cbl-indep_Met_Synth_N"/>
</dbReference>
<dbReference type="InterPro" id="IPR006276">
    <property type="entry name" value="Cobalamin-indep_Met_synthase"/>
</dbReference>
<dbReference type="InterPro" id="IPR002629">
    <property type="entry name" value="Met_Synth_C/arc"/>
</dbReference>
<dbReference type="InterPro" id="IPR038071">
    <property type="entry name" value="UROD/MetE-like_sf"/>
</dbReference>
<dbReference type="NCBIfam" id="TIGR01371">
    <property type="entry name" value="met_syn_B12ind"/>
    <property type="match status" value="1"/>
</dbReference>
<dbReference type="NCBIfam" id="NF003556">
    <property type="entry name" value="PRK05222.1"/>
    <property type="match status" value="1"/>
</dbReference>
<dbReference type="PANTHER" id="PTHR30519">
    <property type="entry name" value="5-METHYLTETRAHYDROPTEROYLTRIGLUTAMATE--HOMOCYSTEINE METHYLTRANSFERASE"/>
    <property type="match status" value="1"/>
</dbReference>
<dbReference type="Pfam" id="PF08267">
    <property type="entry name" value="Meth_synt_1"/>
    <property type="match status" value="1"/>
</dbReference>
<dbReference type="Pfam" id="PF01717">
    <property type="entry name" value="Meth_synt_2"/>
    <property type="match status" value="1"/>
</dbReference>
<dbReference type="PIRSF" id="PIRSF000382">
    <property type="entry name" value="MeTrfase_B12_ind"/>
    <property type="match status" value="1"/>
</dbReference>
<dbReference type="SUPFAM" id="SSF51726">
    <property type="entry name" value="UROD/MetE-like"/>
    <property type="match status" value="2"/>
</dbReference>
<name>METE_CATRO</name>
<proteinExistence type="evidence at transcript level"/>
<keyword id="KW-0028">Amino-acid biosynthesis</keyword>
<keyword id="KW-0963">Cytoplasm</keyword>
<keyword id="KW-0479">Metal-binding</keyword>
<keyword id="KW-0486">Methionine biosynthesis</keyword>
<keyword id="KW-0489">Methyltransferase</keyword>
<keyword id="KW-0808">Transferase</keyword>
<keyword id="KW-0862">Zinc</keyword>
<protein>
    <recommendedName>
        <fullName>5-methyltetrahydropteroyltriglutamate--homocysteine methyltransferase</fullName>
        <ecNumber>2.1.1.14</ecNumber>
    </recommendedName>
    <alternativeName>
        <fullName>Cobalamin-independent methionine synthase isozyme</fullName>
    </alternativeName>
    <alternativeName>
        <fullName>Vitamin-B12-independent methionine synthase isozyme</fullName>
    </alternativeName>
</protein>
<sequence length="765" mass="84857">MASHIVGYPRMGPKRELKFALESFWDKKSSAEDLQKVAADLRSSIWKQMADAGIKYIPSNTFSYYDQVLDTATMLGAVPPRYNFAGGEIGFDTYFSMARGNASVPAMEMTKWFDTNYHYIVPELGPEVNFSYASHKAVNEYKEAKELGVDTVPVLVGPVTFLLLSKPAKGVEKTFPLLSLLDKILPVYKEVIGELKAAGASWIQFDEPTLVLDLESHQLEAFTKAYSELESTLSGLNVIVETYFADIPAETYKILTALKGVTGFGFDLVRGAKTLDLIKGGFPSGKYLFAGVVDGRNIWANDLAASLSTLQSLEGIVGKDKLVVSTSCSLLHTAVDLVNEPKLDKEIKSWLAFAAQKVVEVNALAKALAGEKDEAFFSENAAAQASRKSSPRVTNQAVQKAAAALRGSDHRRATTVSARLDAQQKKLNLPVLPTTTIGSFPQTLELRRVRREYKAKKISEDDYVKAIKEEISKVVKLQEELDIDVLVHGEPERNDMVEYFGEQLSGFAFTANGWVQSYGSRCVKPPIIYGDVSRPNPMTVFWSQTAQSMTKRPMKGMLTGPVTILNWSFVRNDQPRFETCYQIALAIKDEVEDLEKAGINVIQIDEAALREGLPLRKAEHAFYLDWAVHSFRITNLPLQDTTQIHTHMCYSNFNDIIHSIIDMDADVMTIENSRSSEKLLSVFREGVKYGAGIGPGVYDIHSPRIPSTEEIADRINKMLAVLDTNILWVNPDCGLKTRKYAEVKPALENMVSAAKLIRTQLASAK</sequence>
<comment type="function">
    <text>Catalyzes the transfer of a methyl group from 5-methyltetrahydrofolate to homocysteine resulting in methionine formation.</text>
</comment>
<comment type="catalytic activity">
    <reaction>
        <text>5-methyltetrahydropteroyltri-L-glutamate + L-homocysteine = tetrahydropteroyltri-L-glutamate + L-methionine</text>
        <dbReference type="Rhea" id="RHEA:21196"/>
        <dbReference type="ChEBI" id="CHEBI:57844"/>
        <dbReference type="ChEBI" id="CHEBI:58140"/>
        <dbReference type="ChEBI" id="CHEBI:58199"/>
        <dbReference type="ChEBI" id="CHEBI:58207"/>
        <dbReference type="EC" id="2.1.1.14"/>
    </reaction>
</comment>
<comment type="cofactor">
    <cofactor evidence="1">
        <name>Zn(2+)</name>
        <dbReference type="ChEBI" id="CHEBI:29105"/>
    </cofactor>
</comment>
<comment type="pathway">
    <text>Amino-acid biosynthesis; L-methionine biosynthesis via de novo pathway; L-methionine from L-homocysteine (MetE route): step 1/1.</text>
</comment>
<comment type="subcellular location">
    <subcellularLocation>
        <location evidence="4">Cytoplasm</location>
    </subcellularLocation>
</comment>
<comment type="miscellaneous">
    <text>Has an absolute requirement for a polyglutamylated folate as substrate.</text>
</comment>
<comment type="similarity">
    <text evidence="4">Belongs to the vitamin-B12 independent methionine synthase family.</text>
</comment>
<organism>
    <name type="scientific">Catharanthus roseus</name>
    <name type="common">Madagascar periwinkle</name>
    <name type="synonym">Vinca rosea</name>
    <dbReference type="NCBI Taxonomy" id="4058"/>
    <lineage>
        <taxon>Eukaryota</taxon>
        <taxon>Viridiplantae</taxon>
        <taxon>Streptophyta</taxon>
        <taxon>Embryophyta</taxon>
        <taxon>Tracheophyta</taxon>
        <taxon>Spermatophyta</taxon>
        <taxon>Magnoliopsida</taxon>
        <taxon>eudicotyledons</taxon>
        <taxon>Gunneridae</taxon>
        <taxon>Pentapetalae</taxon>
        <taxon>asterids</taxon>
        <taxon>lamiids</taxon>
        <taxon>Gentianales</taxon>
        <taxon>Apocynaceae</taxon>
        <taxon>Rauvolfioideae</taxon>
        <taxon>Vinceae</taxon>
        <taxon>Catharanthinae</taxon>
        <taxon>Catharanthus</taxon>
    </lineage>
</organism>
<accession>Q42699</accession>
<gene>
    <name type="primary">METE</name>
</gene>
<reference key="1">
    <citation type="journal article" date="1995" name="Eur. J. Biochem.">
        <title>Vitamin-B12-independent methionine synthase from a higher plant (Catharanthus roseus). Molecular characterization, regulation, heterologous expression, and enzyme properties.</title>
        <authorList>
            <person name="Eichel J."/>
            <person name="Gonzalez J.C."/>
            <person name="Hotze M."/>
            <person name="Matthews R.G."/>
            <person name="Schroeder J."/>
        </authorList>
    </citation>
    <scope>NUCLEOTIDE SEQUENCE [MRNA]</scope>
</reference>
<evidence type="ECO:0000250" key="1"/>
<evidence type="ECO:0000250" key="2">
    <source>
        <dbReference type="UniProtKB" id="O50008"/>
    </source>
</evidence>
<evidence type="ECO:0000250" key="3">
    <source>
        <dbReference type="UniProtKB" id="P82610"/>
    </source>
</evidence>
<evidence type="ECO:0000305" key="4"/>
<feature type="chain" id="PRO_0000098697" description="5-methyltetrahydropteroyltriglutamate--homocysteine methyltransferase">
    <location>
        <begin position="1"/>
        <end position="765"/>
    </location>
</feature>
<feature type="active site" description="Proton donor" evidence="3">
    <location>
        <position position="701"/>
    </location>
</feature>
<feature type="binding site" evidence="3">
    <location>
        <position position="18"/>
    </location>
    <ligand>
        <name>5-methyltetrahydropteroyltri-L-glutamate</name>
        <dbReference type="ChEBI" id="CHEBI:58207"/>
    </ligand>
</feature>
<feature type="binding site" evidence="3">
    <location>
        <position position="116"/>
    </location>
    <ligand>
        <name>5-methyltetrahydropteroyltri-L-glutamate</name>
        <dbReference type="ChEBI" id="CHEBI:58207"/>
    </ligand>
</feature>
<feature type="binding site" evidence="3">
    <location>
        <begin position="437"/>
        <end position="439"/>
    </location>
    <ligand>
        <name>L-homocysteine</name>
        <dbReference type="ChEBI" id="CHEBI:58199"/>
    </ligand>
</feature>
<feature type="binding site" evidence="3">
    <location>
        <begin position="437"/>
        <end position="439"/>
    </location>
    <ligand>
        <name>L-methionine</name>
        <dbReference type="ChEBI" id="CHEBI:57844"/>
    </ligand>
</feature>
<feature type="binding site" evidence="3">
    <location>
        <position position="490"/>
    </location>
    <ligand>
        <name>L-homocysteine</name>
        <dbReference type="ChEBI" id="CHEBI:58199"/>
    </ligand>
</feature>
<feature type="binding site" evidence="3">
    <location>
        <position position="490"/>
    </location>
    <ligand>
        <name>L-methionine</name>
        <dbReference type="ChEBI" id="CHEBI:57844"/>
    </ligand>
</feature>
<feature type="binding site" evidence="3">
    <location>
        <position position="495"/>
    </location>
    <ligand>
        <name>5-methyltetrahydropteroyltri-L-glutamate</name>
        <dbReference type="ChEBI" id="CHEBI:58207"/>
    </ligand>
</feature>
<feature type="binding site" evidence="3">
    <location>
        <position position="518"/>
    </location>
    <ligand>
        <name>5-methyltetrahydropteroyltri-L-glutamate</name>
        <dbReference type="ChEBI" id="CHEBI:58207"/>
    </ligand>
</feature>
<feature type="binding site" evidence="2">
    <location>
        <begin position="521"/>
        <end position="522"/>
    </location>
    <ligand>
        <name>5-methyltetrahydropteroyltri-L-glutamate</name>
        <dbReference type="ChEBI" id="CHEBI:58207"/>
    </ligand>
</feature>
<feature type="binding site" evidence="3">
    <location>
        <position position="567"/>
    </location>
    <ligand>
        <name>5-methyltetrahydropteroyltri-L-glutamate</name>
        <dbReference type="ChEBI" id="CHEBI:58207"/>
    </ligand>
</feature>
<feature type="binding site" evidence="3">
    <location>
        <position position="605"/>
    </location>
    <ligand>
        <name>L-homocysteine</name>
        <dbReference type="ChEBI" id="CHEBI:58199"/>
    </ligand>
</feature>
<feature type="binding site" evidence="3">
    <location>
        <position position="605"/>
    </location>
    <ligand>
        <name>L-methionine</name>
        <dbReference type="ChEBI" id="CHEBI:57844"/>
    </ligand>
</feature>
<feature type="binding site" evidence="2">
    <location>
        <position position="647"/>
    </location>
    <ligand>
        <name>Zn(2+)</name>
        <dbReference type="ChEBI" id="CHEBI:29105"/>
        <label>1</label>
        <note>catalytic</note>
    </ligand>
</feature>
<feature type="binding site" evidence="2">
    <location>
        <position position="649"/>
    </location>
    <ligand>
        <name>Zn(2+)</name>
        <dbReference type="ChEBI" id="CHEBI:29105"/>
        <label>1</label>
        <note>catalytic</note>
    </ligand>
</feature>
<feature type="binding site" evidence="2">
    <location>
        <position position="658"/>
    </location>
    <ligand>
        <name>Zn(2+)</name>
        <dbReference type="ChEBI" id="CHEBI:29105"/>
        <label>2</label>
    </ligand>
</feature>
<feature type="binding site" evidence="2">
    <location>
        <position position="662"/>
    </location>
    <ligand>
        <name>Zn(2+)</name>
        <dbReference type="ChEBI" id="CHEBI:29105"/>
        <label>2</label>
    </ligand>
</feature>
<feature type="binding site" evidence="3">
    <location>
        <position position="671"/>
    </location>
    <ligand>
        <name>Zn(2+)</name>
        <dbReference type="ChEBI" id="CHEBI:29105"/>
        <label>1</label>
        <note>catalytic</note>
    </ligand>
</feature>
<feature type="binding site" evidence="2">
    <location>
        <position position="733"/>
    </location>
    <ligand>
        <name>Zn(2+)</name>
        <dbReference type="ChEBI" id="CHEBI:29105"/>
        <label>1</label>
        <note>catalytic</note>
    </ligand>
</feature>